<organism>
    <name type="scientific">Vibrio cholerae serotype O1 (strain M66-2)</name>
    <dbReference type="NCBI Taxonomy" id="579112"/>
    <lineage>
        <taxon>Bacteria</taxon>
        <taxon>Pseudomonadati</taxon>
        <taxon>Pseudomonadota</taxon>
        <taxon>Gammaproteobacteria</taxon>
        <taxon>Vibrionales</taxon>
        <taxon>Vibrionaceae</taxon>
        <taxon>Vibrio</taxon>
    </lineage>
</organism>
<dbReference type="EC" id="5.3.1.9" evidence="1"/>
<dbReference type="EMBL" id="CP001233">
    <property type="protein sequence ID" value="ACP04686.1"/>
    <property type="molecule type" value="Genomic_DNA"/>
</dbReference>
<dbReference type="RefSeq" id="WP_000916643.1">
    <property type="nucleotide sequence ID" value="NC_012578.1"/>
</dbReference>
<dbReference type="SMR" id="C3LRA6"/>
<dbReference type="KEGG" id="vcm:VCM66_0358"/>
<dbReference type="HOGENOM" id="CLU_017947_3_1_6"/>
<dbReference type="UniPathway" id="UPA00109">
    <property type="reaction ID" value="UER00181"/>
</dbReference>
<dbReference type="UniPathway" id="UPA00138"/>
<dbReference type="Proteomes" id="UP000001217">
    <property type="component" value="Chromosome I"/>
</dbReference>
<dbReference type="GO" id="GO:0005829">
    <property type="term" value="C:cytosol"/>
    <property type="evidence" value="ECO:0007669"/>
    <property type="project" value="TreeGrafter"/>
</dbReference>
<dbReference type="GO" id="GO:0097367">
    <property type="term" value="F:carbohydrate derivative binding"/>
    <property type="evidence" value="ECO:0007669"/>
    <property type="project" value="InterPro"/>
</dbReference>
<dbReference type="GO" id="GO:0004347">
    <property type="term" value="F:glucose-6-phosphate isomerase activity"/>
    <property type="evidence" value="ECO:0007669"/>
    <property type="project" value="UniProtKB-UniRule"/>
</dbReference>
<dbReference type="GO" id="GO:0048029">
    <property type="term" value="F:monosaccharide binding"/>
    <property type="evidence" value="ECO:0007669"/>
    <property type="project" value="TreeGrafter"/>
</dbReference>
<dbReference type="GO" id="GO:0006094">
    <property type="term" value="P:gluconeogenesis"/>
    <property type="evidence" value="ECO:0007669"/>
    <property type="project" value="UniProtKB-UniRule"/>
</dbReference>
<dbReference type="GO" id="GO:0051156">
    <property type="term" value="P:glucose 6-phosphate metabolic process"/>
    <property type="evidence" value="ECO:0007669"/>
    <property type="project" value="TreeGrafter"/>
</dbReference>
<dbReference type="GO" id="GO:0006096">
    <property type="term" value="P:glycolytic process"/>
    <property type="evidence" value="ECO:0007669"/>
    <property type="project" value="UniProtKB-UniRule"/>
</dbReference>
<dbReference type="CDD" id="cd05015">
    <property type="entry name" value="SIS_PGI_1"/>
    <property type="match status" value="1"/>
</dbReference>
<dbReference type="CDD" id="cd05016">
    <property type="entry name" value="SIS_PGI_2"/>
    <property type="match status" value="1"/>
</dbReference>
<dbReference type="FunFam" id="1.10.1390.10:FF:000001">
    <property type="entry name" value="Glucose-6-phosphate isomerase"/>
    <property type="match status" value="1"/>
</dbReference>
<dbReference type="FunFam" id="3.40.50.10490:FF:000004">
    <property type="entry name" value="Glucose-6-phosphate isomerase"/>
    <property type="match status" value="1"/>
</dbReference>
<dbReference type="Gene3D" id="1.10.1390.10">
    <property type="match status" value="1"/>
</dbReference>
<dbReference type="Gene3D" id="3.40.50.10490">
    <property type="entry name" value="Glucose-6-phosphate isomerase like protein, domain 1"/>
    <property type="match status" value="2"/>
</dbReference>
<dbReference type="HAMAP" id="MF_00473">
    <property type="entry name" value="G6P_isomerase"/>
    <property type="match status" value="1"/>
</dbReference>
<dbReference type="InterPro" id="IPR001672">
    <property type="entry name" value="G6P_Isomerase"/>
</dbReference>
<dbReference type="InterPro" id="IPR023096">
    <property type="entry name" value="G6P_Isomerase_C"/>
</dbReference>
<dbReference type="InterPro" id="IPR018189">
    <property type="entry name" value="Phosphoglucose_isomerase_CS"/>
</dbReference>
<dbReference type="InterPro" id="IPR046348">
    <property type="entry name" value="SIS_dom_sf"/>
</dbReference>
<dbReference type="InterPro" id="IPR035476">
    <property type="entry name" value="SIS_PGI_1"/>
</dbReference>
<dbReference type="InterPro" id="IPR035482">
    <property type="entry name" value="SIS_PGI_2"/>
</dbReference>
<dbReference type="NCBIfam" id="NF001211">
    <property type="entry name" value="PRK00179.1"/>
    <property type="match status" value="1"/>
</dbReference>
<dbReference type="PANTHER" id="PTHR11469">
    <property type="entry name" value="GLUCOSE-6-PHOSPHATE ISOMERASE"/>
    <property type="match status" value="1"/>
</dbReference>
<dbReference type="PANTHER" id="PTHR11469:SF1">
    <property type="entry name" value="GLUCOSE-6-PHOSPHATE ISOMERASE"/>
    <property type="match status" value="1"/>
</dbReference>
<dbReference type="Pfam" id="PF00342">
    <property type="entry name" value="PGI"/>
    <property type="match status" value="1"/>
</dbReference>
<dbReference type="PRINTS" id="PR00662">
    <property type="entry name" value="G6PISOMERASE"/>
</dbReference>
<dbReference type="SUPFAM" id="SSF53697">
    <property type="entry name" value="SIS domain"/>
    <property type="match status" value="1"/>
</dbReference>
<dbReference type="PROSITE" id="PS00765">
    <property type="entry name" value="P_GLUCOSE_ISOMERASE_1"/>
    <property type="match status" value="1"/>
</dbReference>
<dbReference type="PROSITE" id="PS00174">
    <property type="entry name" value="P_GLUCOSE_ISOMERASE_2"/>
    <property type="match status" value="1"/>
</dbReference>
<dbReference type="PROSITE" id="PS51463">
    <property type="entry name" value="P_GLUCOSE_ISOMERASE_3"/>
    <property type="match status" value="1"/>
</dbReference>
<keyword id="KW-0963">Cytoplasm</keyword>
<keyword id="KW-0312">Gluconeogenesis</keyword>
<keyword id="KW-0324">Glycolysis</keyword>
<keyword id="KW-0413">Isomerase</keyword>
<comment type="function">
    <text evidence="1">Catalyzes the reversible isomerization of glucose-6-phosphate to fructose-6-phosphate.</text>
</comment>
<comment type="catalytic activity">
    <reaction evidence="1">
        <text>alpha-D-glucose 6-phosphate = beta-D-fructose 6-phosphate</text>
        <dbReference type="Rhea" id="RHEA:11816"/>
        <dbReference type="ChEBI" id="CHEBI:57634"/>
        <dbReference type="ChEBI" id="CHEBI:58225"/>
        <dbReference type="EC" id="5.3.1.9"/>
    </reaction>
</comment>
<comment type="pathway">
    <text evidence="1">Carbohydrate biosynthesis; gluconeogenesis.</text>
</comment>
<comment type="pathway">
    <text evidence="1">Carbohydrate degradation; glycolysis; D-glyceraldehyde 3-phosphate and glycerone phosphate from D-glucose: step 2/4.</text>
</comment>
<comment type="subcellular location">
    <subcellularLocation>
        <location evidence="1">Cytoplasm</location>
    </subcellularLocation>
</comment>
<comment type="similarity">
    <text evidence="1">Belongs to the GPI family.</text>
</comment>
<evidence type="ECO:0000255" key="1">
    <source>
        <dbReference type="HAMAP-Rule" id="MF_00473"/>
    </source>
</evidence>
<sequence>MLKNINPTQTQAWKALTAHFESAQDMDLKALFAQDSERFAKYSARFGQDILVDYSKNLVNAETMQHLFALAKETDLQSAITAMFKGEAINQTEDRAVLHTALRNRSNSPVLVNGEDVMPAVNAVLAKMKAFSERVIGGEWKGFTGKAITDVVNIGIGGSDLGPYMVTEALVPYKNHLTMHFVSNVDGTHMAETLKNVDPETTLFLVASKTFTTQETMTNAHTARDWFLKAAGDEAHVAKHFAALSTNGKAVAEFGIDTDNMFEFWDWVGGRYSLWSAIGLSIILSIGYDNFVELLAGAHEMDQHFVNTPFESNIPVILALIGIWYNNFHGAESEAILPYDQYLHRFAAYFQQGNMESNGKYVDRNGNPVTYQTGPIIWGEPGTNGQHAFYQLIHQGTKLIPCDFIAPAVSHNLVGDHHQKLMSNFFAQTEALAFGKSAQAVQAELEKAGKSAAEIAALVPFKVFEGNRPTNSILVKQITPRTLGNLIAMYEHKIFVQGVIWNIFSFDQWGVELGKQLANQILPELADSAAVTSHDSSTNGLINAFKAFRA</sequence>
<protein>
    <recommendedName>
        <fullName evidence="1">Glucose-6-phosphate isomerase</fullName>
        <shortName evidence="1">GPI</shortName>
        <ecNumber evidence="1">5.3.1.9</ecNumber>
    </recommendedName>
    <alternativeName>
        <fullName evidence="1">Phosphoglucose isomerase</fullName>
        <shortName evidence="1">PGI</shortName>
    </alternativeName>
    <alternativeName>
        <fullName evidence="1">Phosphohexose isomerase</fullName>
        <shortName evidence="1">PHI</shortName>
    </alternativeName>
</protein>
<accession>C3LRA6</accession>
<proteinExistence type="inferred from homology"/>
<gene>
    <name evidence="1" type="primary">pgi</name>
    <name type="ordered locus">VCM66_0358</name>
</gene>
<name>G6PI_VIBCM</name>
<feature type="chain" id="PRO_1000135540" description="Glucose-6-phosphate isomerase">
    <location>
        <begin position="1"/>
        <end position="550"/>
    </location>
</feature>
<feature type="active site" description="Proton donor" evidence="1">
    <location>
        <position position="356"/>
    </location>
</feature>
<feature type="active site" evidence="1">
    <location>
        <position position="387"/>
    </location>
</feature>
<feature type="active site" evidence="1">
    <location>
        <position position="515"/>
    </location>
</feature>
<reference key="1">
    <citation type="journal article" date="2008" name="PLoS ONE">
        <title>A recalibrated molecular clock and independent origins for the cholera pandemic clones.</title>
        <authorList>
            <person name="Feng L."/>
            <person name="Reeves P.R."/>
            <person name="Lan R."/>
            <person name="Ren Y."/>
            <person name="Gao C."/>
            <person name="Zhou Z."/>
            <person name="Ren Y."/>
            <person name="Cheng J."/>
            <person name="Wang W."/>
            <person name="Wang J."/>
            <person name="Qian W."/>
            <person name="Li D."/>
            <person name="Wang L."/>
        </authorList>
    </citation>
    <scope>NUCLEOTIDE SEQUENCE [LARGE SCALE GENOMIC DNA]</scope>
    <source>
        <strain>M66-2</strain>
    </source>
</reference>